<accession>Q65W91</accession>
<keyword id="KW-0488">Methylation</keyword>
<keyword id="KW-0687">Ribonucleoprotein</keyword>
<keyword id="KW-0689">Ribosomal protein</keyword>
<keyword id="KW-0694">RNA-binding</keyword>
<keyword id="KW-0699">rRNA-binding</keyword>
<keyword id="KW-0820">tRNA-binding</keyword>
<evidence type="ECO:0000250" key="1"/>
<evidence type="ECO:0000255" key="2">
    <source>
        <dbReference type="HAMAP-Rule" id="MF_00403"/>
    </source>
</evidence>
<evidence type="ECO:0000305" key="3"/>
<organism>
    <name type="scientific">Mannheimia succiniciproducens (strain KCTC 0769BP / MBEL55E)</name>
    <dbReference type="NCBI Taxonomy" id="221988"/>
    <lineage>
        <taxon>Bacteria</taxon>
        <taxon>Pseudomonadati</taxon>
        <taxon>Pseudomonadota</taxon>
        <taxon>Gammaproteobacteria</taxon>
        <taxon>Pasteurellales</taxon>
        <taxon>Pasteurellaceae</taxon>
        <taxon>Basfia</taxon>
    </lineage>
</organism>
<protein>
    <recommendedName>
        <fullName evidence="2">Small ribosomal subunit protein uS12</fullName>
    </recommendedName>
    <alternativeName>
        <fullName evidence="3">30S ribosomal protein S12</fullName>
    </alternativeName>
</protein>
<name>RS12_MANSM</name>
<comment type="function">
    <text evidence="2">With S4 and S5 plays an important role in translational accuracy.</text>
</comment>
<comment type="function">
    <text evidence="2">Interacts with and stabilizes bases of the 16S rRNA that are involved in tRNA selection in the A site and with the mRNA backbone. Located at the interface of the 30S and 50S subunits, it traverses the body of the 30S subunit contacting proteins on the other side and probably holding the rRNA structure together. The combined cluster of proteins S8, S12 and S17 appears to hold together the shoulder and platform of the 30S subunit.</text>
</comment>
<comment type="subunit">
    <text evidence="2">Part of the 30S ribosomal subunit. Contacts proteins S8 and S17. May interact with IF1 in the 30S initiation complex.</text>
</comment>
<comment type="similarity">
    <text evidence="2">Belongs to the universal ribosomal protein uS12 family.</text>
</comment>
<feature type="chain" id="PRO_0000146252" description="Small ribosomal subunit protein uS12">
    <location>
        <begin position="1"/>
        <end position="124"/>
    </location>
</feature>
<feature type="modified residue" description="3-methylthioaspartic acid" evidence="1">
    <location>
        <position position="89"/>
    </location>
</feature>
<reference key="1">
    <citation type="journal article" date="2004" name="Nat. Biotechnol.">
        <title>The genome sequence of the capnophilic rumen bacterium Mannheimia succiniciproducens.</title>
        <authorList>
            <person name="Hong S.H."/>
            <person name="Kim J.S."/>
            <person name="Lee S.Y."/>
            <person name="In Y.H."/>
            <person name="Choi S.S."/>
            <person name="Rih J.-K."/>
            <person name="Kim C.H."/>
            <person name="Jeong H."/>
            <person name="Hur C.G."/>
            <person name="Kim J.J."/>
        </authorList>
    </citation>
    <scope>NUCLEOTIDE SEQUENCE [LARGE SCALE GENOMIC DNA]</scope>
    <source>
        <strain>KCTC 0769BP / MBEL55E</strain>
    </source>
</reference>
<sequence>MATINQLVRKPRVKKVVKSNVPALQACPQKRGVCTRVYTTTPKKPNSALRKVCRIRLTNGFEVTSYIGGEGHNLQEHSVVLIRGGRVKDLPGVRYHTVRGALDCAGVKDRKQGRSKYGVKRPKA</sequence>
<proteinExistence type="inferred from homology"/>
<gene>
    <name evidence="2" type="primary">rpsL</name>
    <name type="ordered locus">MS0162</name>
</gene>
<dbReference type="EMBL" id="AE016827">
    <property type="protein sequence ID" value="AAU36769.1"/>
    <property type="molecule type" value="Genomic_DNA"/>
</dbReference>
<dbReference type="RefSeq" id="WP_011199345.1">
    <property type="nucleotide sequence ID" value="NC_006300.1"/>
</dbReference>
<dbReference type="SMR" id="Q65W91"/>
<dbReference type="STRING" id="221988.MS0162"/>
<dbReference type="KEGG" id="msu:MS0162"/>
<dbReference type="eggNOG" id="COG0048">
    <property type="taxonomic scope" value="Bacteria"/>
</dbReference>
<dbReference type="HOGENOM" id="CLU_104295_1_2_6"/>
<dbReference type="OrthoDB" id="9802366at2"/>
<dbReference type="Proteomes" id="UP000000607">
    <property type="component" value="Chromosome"/>
</dbReference>
<dbReference type="GO" id="GO:0015935">
    <property type="term" value="C:small ribosomal subunit"/>
    <property type="evidence" value="ECO:0007669"/>
    <property type="project" value="InterPro"/>
</dbReference>
<dbReference type="GO" id="GO:0019843">
    <property type="term" value="F:rRNA binding"/>
    <property type="evidence" value="ECO:0007669"/>
    <property type="project" value="UniProtKB-UniRule"/>
</dbReference>
<dbReference type="GO" id="GO:0003735">
    <property type="term" value="F:structural constituent of ribosome"/>
    <property type="evidence" value="ECO:0007669"/>
    <property type="project" value="InterPro"/>
</dbReference>
<dbReference type="GO" id="GO:0000049">
    <property type="term" value="F:tRNA binding"/>
    <property type="evidence" value="ECO:0007669"/>
    <property type="project" value="UniProtKB-UniRule"/>
</dbReference>
<dbReference type="GO" id="GO:0006412">
    <property type="term" value="P:translation"/>
    <property type="evidence" value="ECO:0007669"/>
    <property type="project" value="UniProtKB-UniRule"/>
</dbReference>
<dbReference type="CDD" id="cd03368">
    <property type="entry name" value="Ribosomal_S12"/>
    <property type="match status" value="1"/>
</dbReference>
<dbReference type="FunFam" id="2.40.50.140:FF:000001">
    <property type="entry name" value="30S ribosomal protein S12"/>
    <property type="match status" value="1"/>
</dbReference>
<dbReference type="Gene3D" id="2.40.50.140">
    <property type="entry name" value="Nucleic acid-binding proteins"/>
    <property type="match status" value="1"/>
</dbReference>
<dbReference type="HAMAP" id="MF_00403_B">
    <property type="entry name" value="Ribosomal_uS12_B"/>
    <property type="match status" value="1"/>
</dbReference>
<dbReference type="InterPro" id="IPR012340">
    <property type="entry name" value="NA-bd_OB-fold"/>
</dbReference>
<dbReference type="InterPro" id="IPR006032">
    <property type="entry name" value="Ribosomal_uS12"/>
</dbReference>
<dbReference type="InterPro" id="IPR005679">
    <property type="entry name" value="Ribosomal_uS12_bac"/>
</dbReference>
<dbReference type="NCBIfam" id="TIGR00981">
    <property type="entry name" value="rpsL_bact"/>
    <property type="match status" value="1"/>
</dbReference>
<dbReference type="PANTHER" id="PTHR11652">
    <property type="entry name" value="30S RIBOSOMAL PROTEIN S12 FAMILY MEMBER"/>
    <property type="match status" value="1"/>
</dbReference>
<dbReference type="Pfam" id="PF00164">
    <property type="entry name" value="Ribosom_S12_S23"/>
    <property type="match status" value="1"/>
</dbReference>
<dbReference type="PIRSF" id="PIRSF002133">
    <property type="entry name" value="Ribosomal_S12/S23"/>
    <property type="match status" value="1"/>
</dbReference>
<dbReference type="PRINTS" id="PR01034">
    <property type="entry name" value="RIBOSOMALS12"/>
</dbReference>
<dbReference type="SUPFAM" id="SSF50249">
    <property type="entry name" value="Nucleic acid-binding proteins"/>
    <property type="match status" value="1"/>
</dbReference>
<dbReference type="PROSITE" id="PS00055">
    <property type="entry name" value="RIBOSOMAL_S12"/>
    <property type="match status" value="1"/>
</dbReference>